<dbReference type="EC" id="6.3.4.3" evidence="1"/>
<dbReference type="EMBL" id="CP000559">
    <property type="protein sequence ID" value="ABN07178.1"/>
    <property type="molecule type" value="Genomic_DNA"/>
</dbReference>
<dbReference type="RefSeq" id="WP_011833381.1">
    <property type="nucleotide sequence ID" value="NC_008942.1"/>
</dbReference>
<dbReference type="SMR" id="A2SS72"/>
<dbReference type="STRING" id="410358.Mlab_1009"/>
<dbReference type="GeneID" id="4794627"/>
<dbReference type="KEGG" id="mla:Mlab_1009"/>
<dbReference type="eggNOG" id="arCOG04541">
    <property type="taxonomic scope" value="Archaea"/>
</dbReference>
<dbReference type="HOGENOM" id="CLU_003601_3_3_2"/>
<dbReference type="UniPathway" id="UPA00193"/>
<dbReference type="Proteomes" id="UP000000365">
    <property type="component" value="Chromosome"/>
</dbReference>
<dbReference type="GO" id="GO:0005524">
    <property type="term" value="F:ATP binding"/>
    <property type="evidence" value="ECO:0007669"/>
    <property type="project" value="UniProtKB-UniRule"/>
</dbReference>
<dbReference type="GO" id="GO:0004329">
    <property type="term" value="F:formate-tetrahydrofolate ligase activity"/>
    <property type="evidence" value="ECO:0007669"/>
    <property type="project" value="UniProtKB-UniRule"/>
</dbReference>
<dbReference type="GO" id="GO:0035999">
    <property type="term" value="P:tetrahydrofolate interconversion"/>
    <property type="evidence" value="ECO:0007669"/>
    <property type="project" value="UniProtKB-UniRule"/>
</dbReference>
<dbReference type="CDD" id="cd00477">
    <property type="entry name" value="FTHFS"/>
    <property type="match status" value="1"/>
</dbReference>
<dbReference type="FunFam" id="3.30.1510.10:FF:000001">
    <property type="entry name" value="Formate--tetrahydrofolate ligase"/>
    <property type="match status" value="1"/>
</dbReference>
<dbReference type="Gene3D" id="3.30.1510.10">
    <property type="entry name" value="Domain 2, N(10)-formyltetrahydrofolate synthetase"/>
    <property type="match status" value="1"/>
</dbReference>
<dbReference type="Gene3D" id="3.10.410.10">
    <property type="entry name" value="Formyltetrahydrofolate synthetase, domain 3"/>
    <property type="match status" value="1"/>
</dbReference>
<dbReference type="Gene3D" id="3.40.50.300">
    <property type="entry name" value="P-loop containing nucleotide triphosphate hydrolases"/>
    <property type="match status" value="1"/>
</dbReference>
<dbReference type="HAMAP" id="MF_01543">
    <property type="entry name" value="FTHFS"/>
    <property type="match status" value="1"/>
</dbReference>
<dbReference type="InterPro" id="IPR000559">
    <property type="entry name" value="Formate_THF_ligase"/>
</dbReference>
<dbReference type="InterPro" id="IPR020628">
    <property type="entry name" value="Formate_THF_ligase_CS"/>
</dbReference>
<dbReference type="InterPro" id="IPR027417">
    <property type="entry name" value="P-loop_NTPase"/>
</dbReference>
<dbReference type="NCBIfam" id="NF010030">
    <property type="entry name" value="PRK13505.1"/>
    <property type="match status" value="1"/>
</dbReference>
<dbReference type="Pfam" id="PF01268">
    <property type="entry name" value="FTHFS"/>
    <property type="match status" value="1"/>
</dbReference>
<dbReference type="SUPFAM" id="SSF52540">
    <property type="entry name" value="P-loop containing nucleoside triphosphate hydrolases"/>
    <property type="match status" value="1"/>
</dbReference>
<dbReference type="PROSITE" id="PS00721">
    <property type="entry name" value="FTHFS_1"/>
    <property type="match status" value="1"/>
</dbReference>
<dbReference type="PROSITE" id="PS00722">
    <property type="entry name" value="FTHFS_2"/>
    <property type="match status" value="1"/>
</dbReference>
<proteinExistence type="inferred from homology"/>
<gene>
    <name evidence="1" type="primary">fhs</name>
    <name type="ordered locus">Mlab_1009</name>
</gene>
<sequence length="560" mass="59858">MGWKYLLSDIEIAQQCKMKKITEIAASLDITPDELELYGSYKAKLADSLEKRLADKPNGKLILVTAINPTPAGEGKTTTTVGLGQAMPKIGKKAVIALREPSLGPVFGVKGGAAGGGYSQVVPMEDINLHFTGDFHAITSANNLLCAMIDNHIQQGNALDIDTRRIIFKRCLDMNDRALRNIIIGLGGQTNGVPREDHFMITVASEVMAILCLANDIDDLKERLGNVIFGYSRKGTPLYARDLKAVGAMAALLKDAIKPNLVQTLENTPCFIHGGPFANIAHGCNSVRATKLSLKMADYVITEAGFGSDLGAEKFFDIKCRYAGLTPNTVVLVATVRALKYNGGVKKEDTTIPNVAALKAGMVNLEAHIQNLQTFGVPVVVAINRFSTDTDEELAVLKEFCTAQGAEFAISEVFAKGGEGGVELAKKVVASCEKPQKFQCLYELNTPIKEKINALATRIYGADGVVYSPAADAAIKDIDALGRSNLPICMAKTQYSLSDDPNKLGRPKNFVINAATVRLCNGAGFIVVETGDIMTLPGLPAVPAACSIDVNNDGYISGLF</sequence>
<name>FTHS_METLZ</name>
<comment type="catalytic activity">
    <reaction evidence="1">
        <text>(6S)-5,6,7,8-tetrahydrofolate + formate + ATP = (6R)-10-formyltetrahydrofolate + ADP + phosphate</text>
        <dbReference type="Rhea" id="RHEA:20221"/>
        <dbReference type="ChEBI" id="CHEBI:15740"/>
        <dbReference type="ChEBI" id="CHEBI:30616"/>
        <dbReference type="ChEBI" id="CHEBI:43474"/>
        <dbReference type="ChEBI" id="CHEBI:57453"/>
        <dbReference type="ChEBI" id="CHEBI:195366"/>
        <dbReference type="ChEBI" id="CHEBI:456216"/>
        <dbReference type="EC" id="6.3.4.3"/>
    </reaction>
</comment>
<comment type="pathway">
    <text evidence="1">One-carbon metabolism; tetrahydrofolate interconversion.</text>
</comment>
<comment type="similarity">
    <text evidence="1">Belongs to the formate--tetrahydrofolate ligase family.</text>
</comment>
<accession>A2SS72</accession>
<evidence type="ECO:0000255" key="1">
    <source>
        <dbReference type="HAMAP-Rule" id="MF_01543"/>
    </source>
</evidence>
<reference key="1">
    <citation type="journal article" date="2009" name="Stand. Genomic Sci.">
        <title>Complete genome sequence of Methanocorpusculum labreanum type strain Z.</title>
        <authorList>
            <person name="Anderson I.J."/>
            <person name="Sieprawska-Lupa M."/>
            <person name="Goltsman E."/>
            <person name="Lapidus A."/>
            <person name="Copeland A."/>
            <person name="Glavina Del Rio T."/>
            <person name="Tice H."/>
            <person name="Dalin E."/>
            <person name="Barry K."/>
            <person name="Pitluck S."/>
            <person name="Hauser L."/>
            <person name="Land M."/>
            <person name="Lucas S."/>
            <person name="Richardson P."/>
            <person name="Whitman W.B."/>
            <person name="Kyrpides N.C."/>
        </authorList>
    </citation>
    <scope>NUCLEOTIDE SEQUENCE [LARGE SCALE GENOMIC DNA]</scope>
    <source>
        <strain>ATCC 43576 / DSM 4855 / Z</strain>
    </source>
</reference>
<feature type="chain" id="PRO_0000293075" description="Formate--tetrahydrofolate ligase">
    <location>
        <begin position="1"/>
        <end position="560"/>
    </location>
</feature>
<feature type="binding site" evidence="1">
    <location>
        <begin position="70"/>
        <end position="77"/>
    </location>
    <ligand>
        <name>ATP</name>
        <dbReference type="ChEBI" id="CHEBI:30616"/>
    </ligand>
</feature>
<protein>
    <recommendedName>
        <fullName evidence="1">Formate--tetrahydrofolate ligase</fullName>
        <ecNumber evidence="1">6.3.4.3</ecNumber>
    </recommendedName>
    <alternativeName>
        <fullName evidence="1">Formyltetrahydrofolate synthetase</fullName>
        <shortName evidence="1">FHS</shortName>
        <shortName evidence="1">FTHFS</shortName>
    </alternativeName>
</protein>
<organism>
    <name type="scientific">Methanocorpusculum labreanum (strain ATCC 43576 / DSM 4855 / Z)</name>
    <dbReference type="NCBI Taxonomy" id="410358"/>
    <lineage>
        <taxon>Archaea</taxon>
        <taxon>Methanobacteriati</taxon>
        <taxon>Methanobacteriota</taxon>
        <taxon>Stenosarchaea group</taxon>
        <taxon>Methanomicrobia</taxon>
        <taxon>Methanomicrobiales</taxon>
        <taxon>Methanocorpusculaceae</taxon>
        <taxon>Methanocorpusculum</taxon>
    </lineage>
</organism>
<keyword id="KW-0067">ATP-binding</keyword>
<keyword id="KW-0436">Ligase</keyword>
<keyword id="KW-0547">Nucleotide-binding</keyword>
<keyword id="KW-0554">One-carbon metabolism</keyword>
<keyword id="KW-1185">Reference proteome</keyword>